<accession>Q6DB92</accession>
<comment type="function">
    <text evidence="1">Responsible for the low-affinity transport of potassium into the cell. Likely operates as a K(+):H(+) symporter.</text>
</comment>
<comment type="catalytic activity">
    <reaction evidence="1">
        <text>K(+)(in) + H(+)(in) = K(+)(out) + H(+)(out)</text>
        <dbReference type="Rhea" id="RHEA:28490"/>
        <dbReference type="ChEBI" id="CHEBI:15378"/>
        <dbReference type="ChEBI" id="CHEBI:29103"/>
    </reaction>
    <physiologicalReaction direction="right-to-left" evidence="1">
        <dbReference type="Rhea" id="RHEA:28492"/>
    </physiologicalReaction>
</comment>
<comment type="subcellular location">
    <subcellularLocation>
        <location evidence="1">Cell inner membrane</location>
        <topology evidence="1">Multi-pass membrane protein</topology>
    </subcellularLocation>
</comment>
<comment type="similarity">
    <text evidence="1 2">Belongs to the HAK/KUP transporter (TC 2.A.72) family.</text>
</comment>
<proteinExistence type="inferred from homology"/>
<reference key="1">
    <citation type="journal article" date="2004" name="Proc. Natl. Acad. Sci. U.S.A.">
        <title>Genome sequence of the enterobacterial phytopathogen Erwinia carotovora subsp. atroseptica and characterization of virulence factors.</title>
        <authorList>
            <person name="Bell K.S."/>
            <person name="Sebaihia M."/>
            <person name="Pritchard L."/>
            <person name="Holden M.T.G."/>
            <person name="Hyman L.J."/>
            <person name="Holeva M.C."/>
            <person name="Thomson N.R."/>
            <person name="Bentley S.D."/>
            <person name="Churcher L.J.C."/>
            <person name="Mungall K."/>
            <person name="Atkin R."/>
            <person name="Bason N."/>
            <person name="Brooks K."/>
            <person name="Chillingworth T."/>
            <person name="Clark K."/>
            <person name="Doggett J."/>
            <person name="Fraser A."/>
            <person name="Hance Z."/>
            <person name="Hauser H."/>
            <person name="Jagels K."/>
            <person name="Moule S."/>
            <person name="Norbertczak H."/>
            <person name="Ormond D."/>
            <person name="Price C."/>
            <person name="Quail M.A."/>
            <person name="Sanders M."/>
            <person name="Walker D."/>
            <person name="Whitehead S."/>
            <person name="Salmond G.P.C."/>
            <person name="Birch P.R.J."/>
            <person name="Parkhill J."/>
            <person name="Toth I.K."/>
        </authorList>
    </citation>
    <scope>NUCLEOTIDE SEQUENCE [LARGE SCALE GENOMIC DNA]</scope>
    <source>
        <strain>SCRI 1043 / ATCC BAA-672</strain>
    </source>
</reference>
<sequence length="622" mass="69122">MSSEHKRSLPAVTLAAIGVVYGDIGTSPLYTLRECLSGQFGFGVEPHSVFGFLSLIFWLLVLVVSLKYLTYVMRADNAGEGGILTLMSLAGRNTSDRMTSVLVIMGLIGGSFFYGEVVITPAISVMSAMEGLEIAAPAMDSYIVPLSIVVLTLLFIIQKHGTGSVGKLFAPVMLIWFLTLGVLGVRGIIANPEVLQALNPMYAVRFFIEYKAVSFFALGAVVLAITGVEALYADMGHFGKFPIRLAWFTVVLPSLVLNYFGQGALLLKNPEAIKNPFFLLAPDWALIPLMVLATLATVIASQAVISGVFSLTRQAVRLGYLPPMRIVHTSDMESGQIYIPAINWMLYIAVVIVIVSFEHSSNLAAAYGIAVTGTMVITSILFCTVAVKNWLWNRYLAWVLLVGLLIIDVPMFLANVVKILSGGWLPLALGMVMFIIMTTWKSERFRLLRRLHEHGNSLDAMIASLEKSPPTRVPGTAVYFSRATRVIPFALLHNLKHNKILHERVVLLTMRTEDAPYVLNARRVTVEQLSPTFWRVIANYGWRETPDVEEVFQRCWQEGLTCQMMETSFFMSNESLIIGERPWYLRLRGKLFMMLSRNALRAADQFEIPPNRLIELGIQVEI</sequence>
<evidence type="ECO:0000255" key="1">
    <source>
        <dbReference type="HAMAP-Rule" id="MF_01522"/>
    </source>
</evidence>
<evidence type="ECO:0000305" key="2"/>
<gene>
    <name evidence="1" type="primary">kup</name>
    <name type="ordered locus">ECA0006</name>
</gene>
<dbReference type="EMBL" id="BX950851">
    <property type="protein sequence ID" value="CAG72930.1"/>
    <property type="molecule type" value="Genomic_DNA"/>
</dbReference>
<dbReference type="RefSeq" id="WP_011091655.1">
    <property type="nucleotide sequence ID" value="NC_004547.2"/>
</dbReference>
<dbReference type="SMR" id="Q6DB92"/>
<dbReference type="STRING" id="218491.ECA0006"/>
<dbReference type="GeneID" id="57206860"/>
<dbReference type="KEGG" id="eca:ECA0006"/>
<dbReference type="PATRIC" id="fig|218491.5.peg.6"/>
<dbReference type="eggNOG" id="COG3158">
    <property type="taxonomic scope" value="Bacteria"/>
</dbReference>
<dbReference type="HOGENOM" id="CLU_008142_4_2_6"/>
<dbReference type="OrthoDB" id="9805577at2"/>
<dbReference type="Proteomes" id="UP000007966">
    <property type="component" value="Chromosome"/>
</dbReference>
<dbReference type="GO" id="GO:0005886">
    <property type="term" value="C:plasma membrane"/>
    <property type="evidence" value="ECO:0007669"/>
    <property type="project" value="UniProtKB-SubCell"/>
</dbReference>
<dbReference type="GO" id="GO:0015079">
    <property type="term" value="F:potassium ion transmembrane transporter activity"/>
    <property type="evidence" value="ECO:0007669"/>
    <property type="project" value="UniProtKB-UniRule"/>
</dbReference>
<dbReference type="GO" id="GO:0015293">
    <property type="term" value="F:symporter activity"/>
    <property type="evidence" value="ECO:0007669"/>
    <property type="project" value="UniProtKB-UniRule"/>
</dbReference>
<dbReference type="HAMAP" id="MF_01522">
    <property type="entry name" value="Kup"/>
    <property type="match status" value="1"/>
</dbReference>
<dbReference type="InterPro" id="IPR003855">
    <property type="entry name" value="K+_transporter"/>
</dbReference>
<dbReference type="InterPro" id="IPR053952">
    <property type="entry name" value="K_trans_C"/>
</dbReference>
<dbReference type="InterPro" id="IPR053951">
    <property type="entry name" value="K_trans_N"/>
</dbReference>
<dbReference type="InterPro" id="IPR023051">
    <property type="entry name" value="Kup"/>
</dbReference>
<dbReference type="NCBIfam" id="TIGR00794">
    <property type="entry name" value="kup"/>
    <property type="match status" value="1"/>
</dbReference>
<dbReference type="NCBIfam" id="NF008015">
    <property type="entry name" value="PRK10745.1"/>
    <property type="match status" value="1"/>
</dbReference>
<dbReference type="PANTHER" id="PTHR30540:SF79">
    <property type="entry name" value="LOW AFFINITY POTASSIUM TRANSPORT SYSTEM PROTEIN KUP"/>
    <property type="match status" value="1"/>
</dbReference>
<dbReference type="PANTHER" id="PTHR30540">
    <property type="entry name" value="OSMOTIC STRESS POTASSIUM TRANSPORTER"/>
    <property type="match status" value="1"/>
</dbReference>
<dbReference type="Pfam" id="PF02705">
    <property type="entry name" value="K_trans"/>
    <property type="match status" value="1"/>
</dbReference>
<dbReference type="Pfam" id="PF22776">
    <property type="entry name" value="K_trans_C"/>
    <property type="match status" value="1"/>
</dbReference>
<organism>
    <name type="scientific">Pectobacterium atrosepticum (strain SCRI 1043 / ATCC BAA-672)</name>
    <name type="common">Erwinia carotovora subsp. atroseptica</name>
    <dbReference type="NCBI Taxonomy" id="218491"/>
    <lineage>
        <taxon>Bacteria</taxon>
        <taxon>Pseudomonadati</taxon>
        <taxon>Pseudomonadota</taxon>
        <taxon>Gammaproteobacteria</taxon>
        <taxon>Enterobacterales</taxon>
        <taxon>Pectobacteriaceae</taxon>
        <taxon>Pectobacterium</taxon>
    </lineage>
</organism>
<feature type="chain" id="PRO_0000209015" description="Low affinity potassium transport system protein Kup">
    <location>
        <begin position="1"/>
        <end position="622"/>
    </location>
</feature>
<feature type="transmembrane region" description="Helical" evidence="1">
    <location>
        <begin position="9"/>
        <end position="29"/>
    </location>
</feature>
<feature type="transmembrane region" description="Helical" evidence="1">
    <location>
        <begin position="49"/>
        <end position="69"/>
    </location>
</feature>
<feature type="transmembrane region" description="Helical" evidence="1">
    <location>
        <begin position="101"/>
        <end position="121"/>
    </location>
</feature>
<feature type="transmembrane region" description="Helical" evidence="1">
    <location>
        <begin position="137"/>
        <end position="157"/>
    </location>
</feature>
<feature type="transmembrane region" description="Helical" evidence="1">
    <location>
        <begin position="165"/>
        <end position="185"/>
    </location>
</feature>
<feature type="transmembrane region" description="Helical" evidence="1">
    <location>
        <begin position="212"/>
        <end position="232"/>
    </location>
</feature>
<feature type="transmembrane region" description="Helical" evidence="1">
    <location>
        <begin position="247"/>
        <end position="267"/>
    </location>
</feature>
<feature type="transmembrane region" description="Helical" evidence="1">
    <location>
        <begin position="276"/>
        <end position="296"/>
    </location>
</feature>
<feature type="transmembrane region" description="Helical" evidence="1">
    <location>
        <begin position="337"/>
        <end position="357"/>
    </location>
</feature>
<feature type="transmembrane region" description="Helical" evidence="1">
    <location>
        <begin position="363"/>
        <end position="383"/>
    </location>
</feature>
<feature type="transmembrane region" description="Helical" evidence="1">
    <location>
        <begin position="397"/>
        <end position="417"/>
    </location>
</feature>
<feature type="transmembrane region" description="Helical" evidence="1">
    <location>
        <begin position="419"/>
        <end position="439"/>
    </location>
</feature>
<keyword id="KW-0997">Cell inner membrane</keyword>
<keyword id="KW-1003">Cell membrane</keyword>
<keyword id="KW-0406">Ion transport</keyword>
<keyword id="KW-0472">Membrane</keyword>
<keyword id="KW-0630">Potassium</keyword>
<keyword id="KW-0633">Potassium transport</keyword>
<keyword id="KW-1185">Reference proteome</keyword>
<keyword id="KW-0769">Symport</keyword>
<keyword id="KW-0812">Transmembrane</keyword>
<keyword id="KW-1133">Transmembrane helix</keyword>
<keyword id="KW-0813">Transport</keyword>
<name>KUP_PECAS</name>
<protein>
    <recommendedName>
        <fullName evidence="1">Low affinity potassium transport system protein Kup</fullName>
    </recommendedName>
    <alternativeName>
        <fullName evidence="1">Kup system potassium uptake protein</fullName>
    </alternativeName>
</protein>